<proteinExistence type="inferred from homology"/>
<gene>
    <name evidence="1" type="primary">rpsN</name>
    <name type="synonym">rpsN2</name>
    <name type="ordered locus">SCO3430</name>
    <name type="ORF">SCE9.37</name>
</gene>
<protein>
    <recommendedName>
        <fullName evidence="1">Small ribosomal subunit protein uS14A</fullName>
    </recommendedName>
    <alternativeName>
        <fullName evidence="3">30S ribosomal protein S14</fullName>
    </alternativeName>
</protein>
<comment type="function">
    <text evidence="1">Binds 16S rRNA, required for the assembly of 30S particles and may also be responsible for determining the conformation of the 16S rRNA at the A site.</text>
</comment>
<comment type="subunit">
    <text evidence="1">Part of the 30S ribosomal subunit. Contacts proteins S3 and S10.</text>
</comment>
<comment type="similarity">
    <text evidence="1">Belongs to the universal ribosomal protein uS14 family.</text>
</comment>
<accession>Q9X8K9</accession>
<reference key="1">
    <citation type="journal article" date="2002" name="Nature">
        <title>Complete genome sequence of the model actinomycete Streptomyces coelicolor A3(2).</title>
        <authorList>
            <person name="Bentley S.D."/>
            <person name="Chater K.F."/>
            <person name="Cerdeno-Tarraga A.-M."/>
            <person name="Challis G.L."/>
            <person name="Thomson N.R."/>
            <person name="James K.D."/>
            <person name="Harris D.E."/>
            <person name="Quail M.A."/>
            <person name="Kieser H."/>
            <person name="Harper D."/>
            <person name="Bateman A."/>
            <person name="Brown S."/>
            <person name="Chandra G."/>
            <person name="Chen C.W."/>
            <person name="Collins M."/>
            <person name="Cronin A."/>
            <person name="Fraser A."/>
            <person name="Goble A."/>
            <person name="Hidalgo J."/>
            <person name="Hornsby T."/>
            <person name="Howarth S."/>
            <person name="Huang C.-H."/>
            <person name="Kieser T."/>
            <person name="Larke L."/>
            <person name="Murphy L.D."/>
            <person name="Oliver K."/>
            <person name="O'Neil S."/>
            <person name="Rabbinowitsch E."/>
            <person name="Rajandream M.A."/>
            <person name="Rutherford K.M."/>
            <person name="Rutter S."/>
            <person name="Seeger K."/>
            <person name="Saunders D."/>
            <person name="Sharp S."/>
            <person name="Squares R."/>
            <person name="Squares S."/>
            <person name="Taylor K."/>
            <person name="Warren T."/>
            <person name="Wietzorrek A."/>
            <person name="Woodward J.R."/>
            <person name="Barrell B.G."/>
            <person name="Parkhill J."/>
            <person name="Hopwood D.A."/>
        </authorList>
    </citation>
    <scope>NUCLEOTIDE SEQUENCE [LARGE SCALE GENOMIC DNA]</scope>
    <source>
        <strain>ATCC BAA-471 / A3(2) / M145</strain>
    </source>
</reference>
<evidence type="ECO:0000255" key="1">
    <source>
        <dbReference type="HAMAP-Rule" id="MF_00537"/>
    </source>
</evidence>
<evidence type="ECO:0000256" key="2">
    <source>
        <dbReference type="SAM" id="MobiDB-lite"/>
    </source>
</evidence>
<evidence type="ECO:0000305" key="3"/>
<keyword id="KW-1185">Reference proteome</keyword>
<keyword id="KW-0687">Ribonucleoprotein</keyword>
<keyword id="KW-0689">Ribosomal protein</keyword>
<keyword id="KW-0694">RNA-binding</keyword>
<keyword id="KW-0699">rRNA-binding</keyword>
<sequence>MAKKSKIAKNEQRREIVARYAARRAELKEVLRRPSSTEAERLAAQRELRRQPRDASPTRVRNRDQIDGRPRGYLRVFGLSRVNLREQAHAGHLPGVRKSSW</sequence>
<organism>
    <name type="scientific">Streptomyces coelicolor (strain ATCC BAA-471 / A3(2) / M145)</name>
    <dbReference type="NCBI Taxonomy" id="100226"/>
    <lineage>
        <taxon>Bacteria</taxon>
        <taxon>Bacillati</taxon>
        <taxon>Actinomycetota</taxon>
        <taxon>Actinomycetes</taxon>
        <taxon>Kitasatosporales</taxon>
        <taxon>Streptomycetaceae</taxon>
        <taxon>Streptomyces</taxon>
        <taxon>Streptomyces albidoflavus group</taxon>
    </lineage>
</organism>
<name>RS14_STRCO</name>
<feature type="chain" id="PRO_0000130940" description="Small ribosomal subunit protein uS14A">
    <location>
        <begin position="1"/>
        <end position="101"/>
    </location>
</feature>
<feature type="region of interest" description="Disordered" evidence="2">
    <location>
        <begin position="31"/>
        <end position="67"/>
    </location>
</feature>
<feature type="compositionally biased region" description="Basic and acidic residues" evidence="2">
    <location>
        <begin position="38"/>
        <end position="53"/>
    </location>
</feature>
<dbReference type="EMBL" id="AL939116">
    <property type="protein sequence ID" value="CAB42783.1"/>
    <property type="molecule type" value="Genomic_DNA"/>
</dbReference>
<dbReference type="PIR" id="T36356">
    <property type="entry name" value="T36356"/>
</dbReference>
<dbReference type="RefSeq" id="NP_627636.1">
    <property type="nucleotide sequence ID" value="NC_003888.3"/>
</dbReference>
<dbReference type="RefSeq" id="WP_003975403.1">
    <property type="nucleotide sequence ID" value="NZ_VNID01000023.1"/>
</dbReference>
<dbReference type="SMR" id="Q9X8K9"/>
<dbReference type="FunCoup" id="Q9X8K9">
    <property type="interactions" value="375"/>
</dbReference>
<dbReference type="STRING" id="100226.gene:17761052"/>
<dbReference type="PaxDb" id="100226-SCO3430"/>
<dbReference type="KEGG" id="sco:SCO3430"/>
<dbReference type="PATRIC" id="fig|100226.15.peg.3492"/>
<dbReference type="eggNOG" id="COG0199">
    <property type="taxonomic scope" value="Bacteria"/>
</dbReference>
<dbReference type="HOGENOM" id="CLU_139869_0_1_11"/>
<dbReference type="InParanoid" id="Q9X8K9"/>
<dbReference type="OrthoDB" id="9810484at2"/>
<dbReference type="PhylomeDB" id="Q9X8K9"/>
<dbReference type="Proteomes" id="UP000001973">
    <property type="component" value="Chromosome"/>
</dbReference>
<dbReference type="GO" id="GO:0015935">
    <property type="term" value="C:small ribosomal subunit"/>
    <property type="evidence" value="ECO:0000318"/>
    <property type="project" value="GO_Central"/>
</dbReference>
<dbReference type="GO" id="GO:0019843">
    <property type="term" value="F:rRNA binding"/>
    <property type="evidence" value="ECO:0007669"/>
    <property type="project" value="UniProtKB-UniRule"/>
</dbReference>
<dbReference type="GO" id="GO:0003735">
    <property type="term" value="F:structural constituent of ribosome"/>
    <property type="evidence" value="ECO:0000318"/>
    <property type="project" value="GO_Central"/>
</dbReference>
<dbReference type="GO" id="GO:0006412">
    <property type="term" value="P:translation"/>
    <property type="evidence" value="ECO:0000318"/>
    <property type="project" value="GO_Central"/>
</dbReference>
<dbReference type="FunFam" id="1.10.287.1480:FF:000001">
    <property type="entry name" value="30S ribosomal protein S14"/>
    <property type="match status" value="1"/>
</dbReference>
<dbReference type="Gene3D" id="1.10.287.1480">
    <property type="match status" value="1"/>
</dbReference>
<dbReference type="HAMAP" id="MF_00537">
    <property type="entry name" value="Ribosomal_uS14_1"/>
    <property type="match status" value="1"/>
</dbReference>
<dbReference type="InterPro" id="IPR001209">
    <property type="entry name" value="Ribosomal_uS14"/>
</dbReference>
<dbReference type="InterPro" id="IPR023036">
    <property type="entry name" value="Ribosomal_uS14_bac/plastid"/>
</dbReference>
<dbReference type="NCBIfam" id="NF006477">
    <property type="entry name" value="PRK08881.1"/>
    <property type="match status" value="1"/>
</dbReference>
<dbReference type="PANTHER" id="PTHR19836">
    <property type="entry name" value="30S RIBOSOMAL PROTEIN S14"/>
    <property type="match status" value="1"/>
</dbReference>
<dbReference type="PANTHER" id="PTHR19836:SF23">
    <property type="entry name" value="SMALL RIBOSOMAL SUBUNIT PROTEIN US14A"/>
    <property type="match status" value="1"/>
</dbReference>
<dbReference type="Pfam" id="PF00253">
    <property type="entry name" value="Ribosomal_S14"/>
    <property type="match status" value="1"/>
</dbReference>
<dbReference type="SUPFAM" id="SSF57716">
    <property type="entry name" value="Glucocorticoid receptor-like (DNA-binding domain)"/>
    <property type="match status" value="1"/>
</dbReference>